<keyword id="KW-0002">3D-structure</keyword>
<keyword id="KW-0053">Apoptosis</keyword>
<keyword id="KW-1017">Isopeptide bond</keyword>
<keyword id="KW-0472">Membrane</keyword>
<keyword id="KW-0479">Metal-binding</keyword>
<keyword id="KW-0496">Mitochondrion</keyword>
<keyword id="KW-1000">Mitochondrion outer membrane</keyword>
<keyword id="KW-0576">Peroxisome</keyword>
<keyword id="KW-1267">Proteomics identification</keyword>
<keyword id="KW-1185">Reference proteome</keyword>
<keyword id="KW-0808">Transferase</keyword>
<keyword id="KW-0812">Transmembrane</keyword>
<keyword id="KW-1133">Transmembrane helix</keyword>
<keyword id="KW-0832">Ubl conjugation</keyword>
<keyword id="KW-0833">Ubl conjugation pathway</keyword>
<keyword id="KW-0862">Zinc</keyword>
<keyword id="KW-0863">Zinc-finger</keyword>
<proteinExistence type="evidence at protein level"/>
<comment type="function">
    <text evidence="3 4 5 6 8 9 10">Exhibits weak E3 ubiquitin-protein ligase activity (PubMed:18591963, PubMed:19407830, PubMed:22410793). E3 ubiquitin ligases accept ubiquitin from an E2 ubiquitin-conjugating enzyme in the form of a thioester and then directly transfer the ubiquitin to targeted substrates (PubMed:18591963, PubMed:19407830, PubMed:22410793). Can ubiquitinate AKT1 preferentially at 'Lys-284' involving 'Lys-48'-linked polyubiquitination and seems to be involved in regulation of Akt signaling by targeting phosphorylated Akt to proteasomal degradation (PubMed:22410793). Mediates polyubiquitination of cytoplasmic TP53 at 'Lys-24' which targets TP53 for proteasomal degradation, thus reducing TP53 levels in the cytoplasm and mitochondrion (PubMed:21597459). Proposed to preferentially act as a SUMO E3 ligase at physiological concentrations (PubMed:19407830). Plays a role in the control of mitochondrial morphology by promoting mitochondrial fragmentation, and influences mitochondrial localization (PubMed:18207745, PubMed:18213395, PubMed:19407830). Likely to promote mitochondrial fission through negatively regulating the mitochondrial fusion proteins MFN1 and MFN2, acting in a pathway that is parallel to the PRKN/PINK1 regulatory pathway (PubMed:24898855). May also be involved in the sumoylation of the membrane fission protein DNM1L (PubMed:18207745, PubMed:19407830). Inhibits cell growth (PubMed:18591963, PubMed:22410793). When overexpressed, activates JNK through MAP3K7/TAK1 and induces caspase-dependent apoptosis (PubMed:23399697). Involved in the modulation of innate immune defense against viruses by inhibiting RIGI-dependent antiviral response (PubMed:23399697). Can mediate RIGI sumoylation and disrupt its polyubiquitination (PubMed:23399697).</text>
</comment>
<comment type="catalytic activity">
    <reaction evidence="5 7 8">
        <text>S-ubiquitinyl-[E2 ubiquitin-conjugating enzyme]-L-cysteine + [acceptor protein]-L-lysine = [E2 ubiquitin-conjugating enzyme]-L-cysteine + N(6)-ubiquitinyl-[acceptor protein]-L-lysine.</text>
        <dbReference type="EC" id="2.3.2.27"/>
    </reaction>
</comment>
<comment type="pathway">
    <text evidence="7">Protein modification; protein ubiquitination.</text>
</comment>
<comment type="pathway">
    <text evidence="6">Protein modification; protein sumoylation.</text>
</comment>
<comment type="subunit">
    <text evidence="5 6 7 9">Homooligomer (PubMed:18591963). Interacts with MAP3K7/TAK1 (PubMed:18591963). Interacts with UBC9 (PubMed:19407830). Interacts with and sumoylates DNM1L (PubMed:19407830). Interacts with MAVS (PubMed:23399697). Interacts with TP53 (via N-terminus); the interaction leads to ubiquitination and proteasomal degradation of TP53 (PubMed:21597459).</text>
</comment>
<comment type="interaction">
    <interactant intactId="EBI-744120">
        <id>Q969V5</id>
    </interactant>
    <interactant intactId="EBI-743771">
        <id>Q92624</id>
        <label>APPBP2</label>
    </interactant>
    <organismsDiffer>false</organismsDiffer>
    <experiments>6</experiments>
</comment>
<comment type="interaction">
    <interactant intactId="EBI-744120">
        <id>Q969V5</id>
    </interactant>
    <interactant intactId="EBI-368382">
        <id>Q9H9E3</id>
        <label>COG4</label>
    </interactant>
    <organismsDiffer>false</organismsDiffer>
    <experiments>2</experiments>
</comment>
<comment type="interaction">
    <interactant intactId="EBI-744120">
        <id>Q969V5</id>
    </interactant>
    <interactant intactId="EBI-10171774">
        <id>P60410</id>
        <label>KRTAP10-8</label>
    </interactant>
    <organismsDiffer>false</organismsDiffer>
    <experiments>3</experiments>
</comment>
<comment type="interaction">
    <interactant intactId="EBI-744120">
        <id>Q969V5</id>
    </interactant>
    <interactant intactId="EBI-11337973">
        <id>Q9BRK0</id>
        <label>REEP2</label>
    </interactant>
    <organismsDiffer>false</organismsDiffer>
    <experiments>3</experiments>
</comment>
<comment type="interaction">
    <interactant intactId="EBI-744120">
        <id>Q969V5</id>
    </interactant>
    <interactant intactId="EBI-720828">
        <id>Q9C026</id>
        <label>TRIM9</label>
    </interactant>
    <organismsDiffer>false</organismsDiffer>
    <experiments>3</experiments>
</comment>
<comment type="subcellular location">
    <subcellularLocation>
        <location evidence="3 4 5 7">Mitochondrion outer membrane</location>
        <topology evidence="1">Multi-pass membrane protein</topology>
    </subcellularLocation>
    <subcellularLocation>
        <location evidence="3">Peroxisome</location>
    </subcellularLocation>
    <text evidence="3">Transported in mitochondrion-derived vesicles from the mitochondrion to the peroxisome.</text>
</comment>
<comment type="tissue specificity">
    <text evidence="4 5">Widely expressed with highest levels in the heart, skeletal muscle, placenta, kidney and liver. Barely detectable in colon and thymus.</text>
</comment>
<comment type="domain">
    <text evidence="5">The zinc finger domain is required for E3 ligase activity.</text>
</comment>
<comment type="PTM">
    <text evidence="11">Ubiquitinated by PRKN during mitophagy, leading to its degradation and enhancement of mitophagy. Deubiquitinated by USP30.</text>
</comment>
<gene>
    <name type="primary">MUL1</name>
    <name type="synonym">C1orf166</name>
    <name type="synonym">GIDE</name>
    <name type="synonym">MAPL</name>
    <name type="synonym">MULAN</name>
    <name type="synonym">RNF218</name>
</gene>
<name>MUL1_HUMAN</name>
<accession>Q969V5</accession>
<accession>B5M497</accession>
<accession>Q7Z431</accession>
<accession>Q9H9B5</accession>
<dbReference type="EC" id="2.3.2.27" evidence="5 7 8"/>
<dbReference type="EMBL" id="EU935008">
    <property type="protein sequence ID" value="ACH72645.1"/>
    <property type="molecule type" value="mRNA"/>
</dbReference>
<dbReference type="EMBL" id="AB097015">
    <property type="protein sequence ID" value="BAC77368.1"/>
    <property type="molecule type" value="mRNA"/>
</dbReference>
<dbReference type="EMBL" id="AK022937">
    <property type="protein sequence ID" value="BAB14317.1"/>
    <property type="molecule type" value="mRNA"/>
</dbReference>
<dbReference type="EMBL" id="AL833889">
    <property type="protein sequence ID" value="CAD38745.1"/>
    <property type="molecule type" value="mRNA"/>
</dbReference>
<dbReference type="EMBL" id="AL391357">
    <property type="status" value="NOT_ANNOTATED_CDS"/>
    <property type="molecule type" value="Genomic_DNA"/>
</dbReference>
<dbReference type="EMBL" id="BC010101">
    <property type="protein sequence ID" value="AAH10101.1"/>
    <property type="molecule type" value="mRNA"/>
</dbReference>
<dbReference type="EMBL" id="BC014010">
    <property type="protein sequence ID" value="AAH14010.1"/>
    <property type="molecule type" value="mRNA"/>
</dbReference>
<dbReference type="CCDS" id="CCDS208.1"/>
<dbReference type="RefSeq" id="NP_078820.2">
    <property type="nucleotide sequence ID" value="NM_024544.3"/>
</dbReference>
<dbReference type="PDB" id="6K2K">
    <property type="method" value="NMR"/>
    <property type="chains" value="A=297-352"/>
</dbReference>
<dbReference type="PDB" id="6M2C">
    <property type="method" value="X-ray"/>
    <property type="resolution" value="2.70 A"/>
    <property type="chains" value="E/F/G/H=298-352"/>
</dbReference>
<dbReference type="PDB" id="6M2D">
    <property type="method" value="X-ray"/>
    <property type="resolution" value="1.79 A"/>
    <property type="chains" value="A/B/C/D/E/F=297-352"/>
</dbReference>
<dbReference type="PDBsum" id="6K2K"/>
<dbReference type="PDBsum" id="6M2C"/>
<dbReference type="PDBsum" id="6M2D"/>
<dbReference type="SMR" id="Q969V5"/>
<dbReference type="BioGRID" id="122734">
    <property type="interactions" value="104"/>
</dbReference>
<dbReference type="FunCoup" id="Q969V5">
    <property type="interactions" value="840"/>
</dbReference>
<dbReference type="IntAct" id="Q969V5">
    <property type="interactions" value="69"/>
</dbReference>
<dbReference type="MINT" id="Q969V5"/>
<dbReference type="STRING" id="9606.ENSP00000264198"/>
<dbReference type="GlyGen" id="Q969V5">
    <property type="glycosylation" value="1 site"/>
</dbReference>
<dbReference type="iPTMnet" id="Q969V5"/>
<dbReference type="PhosphoSitePlus" id="Q969V5"/>
<dbReference type="SwissPalm" id="Q969V5"/>
<dbReference type="BioMuta" id="MUL1"/>
<dbReference type="DMDM" id="74760689"/>
<dbReference type="jPOST" id="Q969V5"/>
<dbReference type="MassIVE" id="Q969V5"/>
<dbReference type="PaxDb" id="9606-ENSP00000264198"/>
<dbReference type="PeptideAtlas" id="Q969V5"/>
<dbReference type="ProteomicsDB" id="75853"/>
<dbReference type="Pumba" id="Q969V5"/>
<dbReference type="Antibodypedia" id="2986">
    <property type="antibodies" value="267 antibodies from 31 providers"/>
</dbReference>
<dbReference type="DNASU" id="79594"/>
<dbReference type="Ensembl" id="ENST00000264198.5">
    <property type="protein sequence ID" value="ENSP00000264198.3"/>
    <property type="gene ID" value="ENSG00000090432.7"/>
</dbReference>
<dbReference type="GeneID" id="79594"/>
<dbReference type="KEGG" id="hsa:79594"/>
<dbReference type="MANE-Select" id="ENST00000264198.5">
    <property type="protein sequence ID" value="ENSP00000264198.3"/>
    <property type="RefSeq nucleotide sequence ID" value="NM_024544.3"/>
    <property type="RefSeq protein sequence ID" value="NP_078820.2"/>
</dbReference>
<dbReference type="UCSC" id="uc001bdi.5">
    <property type="organism name" value="human"/>
</dbReference>
<dbReference type="AGR" id="HGNC:25762"/>
<dbReference type="CTD" id="79594"/>
<dbReference type="DisGeNET" id="79594"/>
<dbReference type="GeneCards" id="MUL1"/>
<dbReference type="HGNC" id="HGNC:25762">
    <property type="gene designation" value="MUL1"/>
</dbReference>
<dbReference type="HPA" id="ENSG00000090432">
    <property type="expression patterns" value="Low tissue specificity"/>
</dbReference>
<dbReference type="MIM" id="612037">
    <property type="type" value="gene"/>
</dbReference>
<dbReference type="neXtProt" id="NX_Q969V5"/>
<dbReference type="OpenTargets" id="ENSG00000090432"/>
<dbReference type="PharmGKB" id="PA162396329"/>
<dbReference type="VEuPathDB" id="HostDB:ENSG00000090432"/>
<dbReference type="eggNOG" id="KOG1571">
    <property type="taxonomic scope" value="Eukaryota"/>
</dbReference>
<dbReference type="GeneTree" id="ENSGT00390000012141"/>
<dbReference type="HOGENOM" id="CLU_050604_1_0_1"/>
<dbReference type="InParanoid" id="Q969V5"/>
<dbReference type="OMA" id="YILWKQY"/>
<dbReference type="OrthoDB" id="66726at2759"/>
<dbReference type="PAN-GO" id="Q969V5">
    <property type="GO annotations" value="3 GO annotations based on evolutionary models"/>
</dbReference>
<dbReference type="PhylomeDB" id="Q969V5"/>
<dbReference type="TreeFam" id="TF325195"/>
<dbReference type="BRENDA" id="2.3.2.27">
    <property type="organism ID" value="2681"/>
</dbReference>
<dbReference type="PathwayCommons" id="Q969V5"/>
<dbReference type="Reactome" id="R-HSA-5689880">
    <property type="pathway name" value="Ub-specific processing proteases"/>
</dbReference>
<dbReference type="Reactome" id="R-HSA-8951664">
    <property type="pathway name" value="Neddylation"/>
</dbReference>
<dbReference type="Reactome" id="R-HSA-9755511">
    <property type="pathway name" value="KEAP1-NFE2L2 pathway"/>
</dbReference>
<dbReference type="SignaLink" id="Q969V5"/>
<dbReference type="SIGNOR" id="Q969V5"/>
<dbReference type="UniPathway" id="UPA00143"/>
<dbReference type="UniPathway" id="UPA00886"/>
<dbReference type="BioGRID-ORCS" id="79594">
    <property type="hits" value="13 hits in 1197 CRISPR screens"/>
</dbReference>
<dbReference type="GenomeRNAi" id="79594"/>
<dbReference type="Pharos" id="Q969V5">
    <property type="development level" value="Tbio"/>
</dbReference>
<dbReference type="PRO" id="PR:Q969V5"/>
<dbReference type="Proteomes" id="UP000005640">
    <property type="component" value="Chromosome 1"/>
</dbReference>
<dbReference type="RNAct" id="Q969V5">
    <property type="molecule type" value="protein"/>
</dbReference>
<dbReference type="Bgee" id="ENSG00000090432">
    <property type="expression patterns" value="Expressed in apex of heart and 165 other cell types or tissues"/>
</dbReference>
<dbReference type="ExpressionAtlas" id="Q969V5">
    <property type="expression patterns" value="baseline and differential"/>
</dbReference>
<dbReference type="GO" id="GO:0030424">
    <property type="term" value="C:axon"/>
    <property type="evidence" value="ECO:0000315"/>
    <property type="project" value="ParkinsonsUK-UCL"/>
</dbReference>
<dbReference type="GO" id="GO:0016020">
    <property type="term" value="C:membrane"/>
    <property type="evidence" value="ECO:0007005"/>
    <property type="project" value="UniProtKB"/>
</dbReference>
<dbReference type="GO" id="GO:0005741">
    <property type="term" value="C:mitochondrial outer membrane"/>
    <property type="evidence" value="ECO:0000314"/>
    <property type="project" value="UniProtKB"/>
</dbReference>
<dbReference type="GO" id="GO:0005739">
    <property type="term" value="C:mitochondrion"/>
    <property type="evidence" value="ECO:0000314"/>
    <property type="project" value="UniProtKB"/>
</dbReference>
<dbReference type="GO" id="GO:0043025">
    <property type="term" value="C:neuronal cell body"/>
    <property type="evidence" value="ECO:0000315"/>
    <property type="project" value="ParkinsonsUK-UCL"/>
</dbReference>
<dbReference type="GO" id="GO:0005777">
    <property type="term" value="C:peroxisome"/>
    <property type="evidence" value="ECO:0000314"/>
    <property type="project" value="UniProtKB"/>
</dbReference>
<dbReference type="GO" id="GO:0042802">
    <property type="term" value="F:identical protein binding"/>
    <property type="evidence" value="ECO:0000353"/>
    <property type="project" value="UniProtKB"/>
</dbReference>
<dbReference type="GO" id="GO:0002039">
    <property type="term" value="F:p53 binding"/>
    <property type="evidence" value="ECO:0000353"/>
    <property type="project" value="UniProtKB"/>
</dbReference>
<dbReference type="GO" id="GO:0019789">
    <property type="term" value="F:SUMO transferase activity"/>
    <property type="evidence" value="ECO:0000314"/>
    <property type="project" value="UniProtKB"/>
</dbReference>
<dbReference type="GO" id="GO:0061630">
    <property type="term" value="F:ubiquitin protein ligase activity"/>
    <property type="evidence" value="ECO:0000314"/>
    <property type="project" value="UniProtKB"/>
</dbReference>
<dbReference type="GO" id="GO:0031625">
    <property type="term" value="F:ubiquitin protein ligase binding"/>
    <property type="evidence" value="ECO:0000353"/>
    <property type="project" value="UniProtKB"/>
</dbReference>
<dbReference type="GO" id="GO:0004842">
    <property type="term" value="F:ubiquitin-protein transferase activity"/>
    <property type="evidence" value="ECO:0000318"/>
    <property type="project" value="GO_Central"/>
</dbReference>
<dbReference type="GO" id="GO:0008270">
    <property type="term" value="F:zinc ion binding"/>
    <property type="evidence" value="ECO:0007669"/>
    <property type="project" value="UniProtKB-KW"/>
</dbReference>
<dbReference type="GO" id="GO:0006915">
    <property type="term" value="P:apoptotic process"/>
    <property type="evidence" value="ECO:0007669"/>
    <property type="project" value="UniProtKB-KW"/>
</dbReference>
<dbReference type="GO" id="GO:0071360">
    <property type="term" value="P:cellular response to exogenous dsRNA"/>
    <property type="evidence" value="ECO:0000314"/>
    <property type="project" value="UniProtKB"/>
</dbReference>
<dbReference type="GO" id="GO:0000266">
    <property type="term" value="P:mitochondrial fission"/>
    <property type="evidence" value="ECO:0000315"/>
    <property type="project" value="UniProtKB"/>
</dbReference>
<dbReference type="GO" id="GO:0051646">
    <property type="term" value="P:mitochondrion localization"/>
    <property type="evidence" value="ECO:0000315"/>
    <property type="project" value="UniProtKB"/>
</dbReference>
<dbReference type="GO" id="GO:0071650">
    <property type="term" value="P:negative regulation of chemokine (C-C motif) ligand 5 production"/>
    <property type="evidence" value="ECO:0000315"/>
    <property type="project" value="UniProtKB"/>
</dbReference>
<dbReference type="GO" id="GO:0050689">
    <property type="term" value="P:negative regulation of defense response to virus by host"/>
    <property type="evidence" value="ECO:0000315"/>
    <property type="project" value="UniProtKB"/>
</dbReference>
<dbReference type="GO" id="GO:0045824">
    <property type="term" value="P:negative regulation of innate immune response"/>
    <property type="evidence" value="ECO:0000315"/>
    <property type="project" value="UniProtKB"/>
</dbReference>
<dbReference type="GO" id="GO:0010637">
    <property type="term" value="P:negative regulation of mitochondrial fusion"/>
    <property type="evidence" value="ECO:0000314"/>
    <property type="project" value="UniProtKB"/>
</dbReference>
<dbReference type="GO" id="GO:0051898">
    <property type="term" value="P:negative regulation of phosphatidylinositol 3-kinase/protein kinase B signal transduction"/>
    <property type="evidence" value="ECO:0000314"/>
    <property type="project" value="UniProtKB"/>
</dbReference>
<dbReference type="GO" id="GO:0060339">
    <property type="term" value="P:negative regulation of type I interferon-mediated signaling pathway"/>
    <property type="evidence" value="ECO:0000315"/>
    <property type="project" value="UniProtKB"/>
</dbReference>
<dbReference type="GO" id="GO:0043123">
    <property type="term" value="P:positive regulation of canonical NF-kappaB signal transduction"/>
    <property type="evidence" value="ECO:0007001"/>
    <property type="project" value="UniProtKB"/>
</dbReference>
<dbReference type="GO" id="GO:1903861">
    <property type="term" value="P:positive regulation of dendrite extension"/>
    <property type="evidence" value="ECO:0007669"/>
    <property type="project" value="Ensembl"/>
</dbReference>
<dbReference type="GO" id="GO:0090141">
    <property type="term" value="P:positive regulation of mitochondrial fission"/>
    <property type="evidence" value="ECO:0000314"/>
    <property type="project" value="UniProtKB"/>
</dbReference>
<dbReference type="GO" id="GO:0033235">
    <property type="term" value="P:positive regulation of protein sumoylation"/>
    <property type="evidence" value="ECO:0000314"/>
    <property type="project" value="UniProtKB"/>
</dbReference>
<dbReference type="GO" id="GO:1905091">
    <property type="term" value="P:positive regulation of type 2 mitophagy"/>
    <property type="evidence" value="ECO:0007669"/>
    <property type="project" value="Ensembl"/>
</dbReference>
<dbReference type="GO" id="GO:0031648">
    <property type="term" value="P:protein destabilization"/>
    <property type="evidence" value="ECO:0000315"/>
    <property type="project" value="ParkinsonsUK-UCL"/>
</dbReference>
<dbReference type="GO" id="GO:0000209">
    <property type="term" value="P:protein polyubiquitination"/>
    <property type="evidence" value="ECO:0000314"/>
    <property type="project" value="UniProtKB"/>
</dbReference>
<dbReference type="GO" id="GO:0050821">
    <property type="term" value="P:protein stabilization"/>
    <property type="evidence" value="ECO:0000315"/>
    <property type="project" value="UniProtKB"/>
</dbReference>
<dbReference type="GO" id="GO:0016925">
    <property type="term" value="P:protein sumoylation"/>
    <property type="evidence" value="ECO:0007669"/>
    <property type="project" value="UniProtKB-UniPathway"/>
</dbReference>
<dbReference type="GO" id="GO:0016567">
    <property type="term" value="P:protein ubiquitination"/>
    <property type="evidence" value="ECO:0000314"/>
    <property type="project" value="UniProtKB"/>
</dbReference>
<dbReference type="GO" id="GO:0051881">
    <property type="term" value="P:regulation of mitochondrial membrane potential"/>
    <property type="evidence" value="ECO:0007669"/>
    <property type="project" value="Ensembl"/>
</dbReference>
<dbReference type="GO" id="GO:1901028">
    <property type="term" value="P:regulation of mitochondrial outer membrane permeabilization involved in apoptotic signaling pathway"/>
    <property type="evidence" value="ECO:0000314"/>
    <property type="project" value="UniProtKB"/>
</dbReference>
<dbReference type="GO" id="GO:0010821">
    <property type="term" value="P:regulation of mitochondrion organization"/>
    <property type="evidence" value="ECO:0000315"/>
    <property type="project" value="ParkinsonsUK-UCL"/>
</dbReference>
<dbReference type="CDD" id="cd16648">
    <property type="entry name" value="mRING-HC-C3HC5_MAPL"/>
    <property type="match status" value="1"/>
</dbReference>
<dbReference type="FunFam" id="3.30.40.10:FF:000351">
    <property type="entry name" value="Mitochondrial ubiquitin ligase activator of NFKB 1"/>
    <property type="match status" value="1"/>
</dbReference>
<dbReference type="Gene3D" id="3.30.40.10">
    <property type="entry name" value="Zinc/RING finger domain, C3HC4 (zinc finger)"/>
    <property type="match status" value="1"/>
</dbReference>
<dbReference type="InterPro" id="IPR051652">
    <property type="entry name" value="MDM2_MDM4_MUL1"/>
</dbReference>
<dbReference type="InterPro" id="IPR022170">
    <property type="entry name" value="MUL1-like"/>
</dbReference>
<dbReference type="InterPro" id="IPR001841">
    <property type="entry name" value="Znf_RING"/>
</dbReference>
<dbReference type="InterPro" id="IPR013083">
    <property type="entry name" value="Znf_RING/FYVE/PHD"/>
</dbReference>
<dbReference type="PANTHER" id="PTHR12183">
    <property type="entry name" value="MITOCHONDRIAL UBIQUITIN LIGASE ACTIVATOR OF NFKB 1"/>
    <property type="match status" value="1"/>
</dbReference>
<dbReference type="PANTHER" id="PTHR12183:SF4">
    <property type="entry name" value="MITOCHONDRIAL UBIQUITIN LIGASE ACTIVATOR OF NFKB 1"/>
    <property type="match status" value="1"/>
</dbReference>
<dbReference type="Pfam" id="PF12483">
    <property type="entry name" value="GIDE"/>
    <property type="match status" value="1"/>
</dbReference>
<dbReference type="Pfam" id="PF13920">
    <property type="entry name" value="zf-C3HC4_3"/>
    <property type="match status" value="1"/>
</dbReference>
<dbReference type="SUPFAM" id="SSF57850">
    <property type="entry name" value="RING/U-box"/>
    <property type="match status" value="1"/>
</dbReference>
<dbReference type="PROSITE" id="PS50089">
    <property type="entry name" value="ZF_RING_2"/>
    <property type="match status" value="1"/>
</dbReference>
<sequence length="352" mass="39800">MESGGRPSLCQFILLGTTSVVTAALYSVYRQKARVSQELKGAKKVHLGEDLKSILSEAPGKCVPYAVIEGAVRSVKETLNSQFVENCKGVIQRLTLQEHKMVWNRTTHLWNDCSKIIHQRTNTVPFDLVPHEDGVDVAVRVLKPLDSVDLGLETVYEKFHPSIQSFTDVIGHYISGERPKGIQETEEMLKVGATLTGVGELVLDNNSVRLQPPKQGMQYYLSSQDFDSLLQRQESSVRLWKVLALVFGFATCATLFFILRKQYLQRQERLRLKQMQEEFQEHEAQLLSRAKPEDRESLKSACVVCLSSFKSCVFLECGHVCSCTECYRALPEPKKCPICRQAITRVIPLYNS</sequence>
<evidence type="ECO:0000255" key="1"/>
<evidence type="ECO:0000255" key="2">
    <source>
        <dbReference type="PROSITE-ProRule" id="PRU00175"/>
    </source>
</evidence>
<evidence type="ECO:0000269" key="3">
    <source>
    </source>
</evidence>
<evidence type="ECO:0000269" key="4">
    <source>
    </source>
</evidence>
<evidence type="ECO:0000269" key="5">
    <source>
    </source>
</evidence>
<evidence type="ECO:0000269" key="6">
    <source>
    </source>
</evidence>
<evidence type="ECO:0000269" key="7">
    <source>
    </source>
</evidence>
<evidence type="ECO:0000269" key="8">
    <source>
    </source>
</evidence>
<evidence type="ECO:0000269" key="9">
    <source>
    </source>
</evidence>
<evidence type="ECO:0000269" key="10">
    <source>
    </source>
</evidence>
<evidence type="ECO:0000269" key="11">
    <source>
    </source>
</evidence>
<evidence type="ECO:0000303" key="12">
    <source>
    </source>
</evidence>
<evidence type="ECO:0000305" key="13"/>
<evidence type="ECO:0007829" key="14">
    <source>
        <dbReference type="PDB" id="6M2C"/>
    </source>
</evidence>
<evidence type="ECO:0007829" key="15">
    <source>
        <dbReference type="PDB" id="6M2D"/>
    </source>
</evidence>
<feature type="chain" id="PRO_0000277660" description="Mitochondrial ubiquitin ligase activator of NFKB 1">
    <location>
        <begin position="1"/>
        <end position="352"/>
    </location>
</feature>
<feature type="topological domain" description="Cytoplasmic" evidence="1">
    <location>
        <begin position="1"/>
        <end position="8"/>
    </location>
</feature>
<feature type="transmembrane region" description="Helical" evidence="1">
    <location>
        <begin position="9"/>
        <end position="29"/>
    </location>
</feature>
<feature type="topological domain" description="Mitochondrial intermembrane" evidence="1">
    <location>
        <begin position="30"/>
        <end position="238"/>
    </location>
</feature>
<feature type="transmembrane region" description="Helical" evidence="1">
    <location>
        <begin position="239"/>
        <end position="259"/>
    </location>
</feature>
<feature type="topological domain" description="Cytoplasmic" evidence="1">
    <location>
        <begin position="260"/>
        <end position="352"/>
    </location>
</feature>
<feature type="zinc finger region" description="RING-type" evidence="2">
    <location>
        <begin position="302"/>
        <end position="340"/>
    </location>
</feature>
<feature type="cross-link" description="Glycyl lysine isopeptide (Lys-Gly) (interchain with G-Cter in ubiquitin)" evidence="11">
    <location>
        <position position="52"/>
    </location>
</feature>
<feature type="cross-link" description="Glycyl lysine isopeptide (Lys-Gly) (interchain with G-Cter in ubiquitin)" evidence="11">
    <location>
        <position position="273"/>
    </location>
</feature>
<feature type="cross-link" description="Glycyl lysine isopeptide (Lys-Gly) (interchain with G-Cter in ubiquitin)" evidence="11">
    <location>
        <position position="299"/>
    </location>
</feature>
<feature type="mutagenesis site" description="Protein is targeted to the ER; when associated with A-261." evidence="4">
    <original>R</original>
    <variation>A</variation>
    <location>
        <position position="260"/>
    </location>
</feature>
<feature type="mutagenesis site" description="Protein is targeted to the ER; when associated with A-260." evidence="4">
    <original>K</original>
    <variation>A</variation>
    <location>
        <position position="261"/>
    </location>
</feature>
<feature type="mutagenesis site" description="Failure to reduce TP53 levels and abolishes ligase activity; when associated with S-305." evidence="7">
    <original>C</original>
    <variation>S</variation>
    <location>
        <position position="302"/>
    </location>
</feature>
<feature type="mutagenesis site" description="Failure to reduce TP53 levels and abolishes ligase activity; when associated with S-302." evidence="7">
    <original>C</original>
    <variation>S</variation>
    <location>
        <position position="305"/>
    </location>
</feature>
<feature type="mutagenesis site" description="Abolishes ligase activity. No effect on mitochondrial localization." evidence="5">
    <original>H</original>
    <variation>A</variation>
    <location>
        <position position="319"/>
    </location>
</feature>
<feature type="mutagenesis site" description="Abolishes ligase activity." evidence="4">
    <original>C</original>
    <variation>A</variation>
    <location>
        <position position="339"/>
    </location>
</feature>
<feature type="sequence conflict" description="In Ref. 3; BAB14317." evidence="13" ref="3">
    <original>W</original>
    <variation>C</variation>
    <location>
        <position position="240"/>
    </location>
</feature>
<feature type="sequence conflict" description="In Ref. 1; ACH72645 and 2; BAC77368." evidence="13" ref="1 2">
    <original>L</original>
    <variation>P</variation>
    <location>
        <position position="349"/>
    </location>
</feature>
<feature type="helix" evidence="15">
    <location>
        <begin position="297"/>
        <end position="300"/>
    </location>
</feature>
<feature type="turn" evidence="15">
    <location>
        <begin position="303"/>
        <end position="305"/>
    </location>
</feature>
<feature type="strand" evidence="15">
    <location>
        <begin position="306"/>
        <end position="309"/>
    </location>
</feature>
<feature type="strand" evidence="15">
    <location>
        <begin position="312"/>
        <end position="315"/>
    </location>
</feature>
<feature type="turn" evidence="14">
    <location>
        <begin position="316"/>
        <end position="318"/>
    </location>
</feature>
<feature type="strand" evidence="14">
    <location>
        <begin position="319"/>
        <end position="322"/>
    </location>
</feature>
<feature type="helix" evidence="15">
    <location>
        <begin position="324"/>
        <end position="329"/>
    </location>
</feature>
<feature type="turn" evidence="15">
    <location>
        <begin position="337"/>
        <end position="339"/>
    </location>
</feature>
<feature type="strand" evidence="15">
    <location>
        <begin position="345"/>
        <end position="350"/>
    </location>
</feature>
<protein>
    <recommendedName>
        <fullName>Mitochondrial ubiquitin ligase activator of NFKB 1</fullName>
        <ecNumber evidence="5 7 8">2.3.2.27</ecNumber>
    </recommendedName>
    <alternativeName>
        <fullName>E3 SUMO-protein ligase MUL1</fullName>
    </alternativeName>
    <alternativeName>
        <fullName>E3 ubiquitin-protein ligase MUL1</fullName>
    </alternativeName>
    <alternativeName>
        <fullName>Growth inhibition and death E3 ligase</fullName>
    </alternativeName>
    <alternativeName>
        <fullName>Mitochondrial-anchored protein ligase</fullName>
    </alternativeName>
    <alternativeName>
        <fullName evidence="12">Protein Hades</fullName>
    </alternativeName>
    <alternativeName>
        <fullName>Putative NF-kappa-B-activating protein 266</fullName>
    </alternativeName>
    <alternativeName>
        <fullName>RING finger protein 218</fullName>
    </alternativeName>
    <alternativeName>
        <fullName evidence="13">RING-type E3 ubiquitin transferase NFKB 1</fullName>
    </alternativeName>
</protein>
<reference key="1">
    <citation type="journal article" date="2008" name="Cell Res.">
        <title>GIDE is a mitochondrial E3 ubiquitin ligase that induces apoptosis and slows growth.</title>
        <authorList>
            <person name="Zhang B."/>
            <person name="Huang J."/>
            <person name="Li H.-L."/>
            <person name="Liu T."/>
            <person name="Wang Y.-Y."/>
            <person name="Waterman P."/>
            <person name="Mao A.-P."/>
            <person name="Xu L.-G."/>
            <person name="Zhai Z."/>
            <person name="Liu D."/>
            <person name="Marrack P."/>
            <person name="Shu H.-B."/>
        </authorList>
    </citation>
    <scope>NUCLEOTIDE SEQUENCE [MRNA]</scope>
    <scope>FUNCTION</scope>
    <scope>CATALYTIC ACTIVITY</scope>
    <scope>SUBUNIT</scope>
    <scope>INTERACTION WITH MAP3K7</scope>
    <scope>SUBCELLULAR LOCATION</scope>
    <scope>TISSUE SPECIFICITY</scope>
    <scope>DOMAIN</scope>
    <scope>MUTAGENESIS OF HIS-319</scope>
</reference>
<reference key="2">
    <citation type="journal article" date="2003" name="Oncogene">
        <title>Large-scale identification and characterization of human genes that activate NF-kappaB and MAPK signaling pathways.</title>
        <authorList>
            <person name="Matsuda A."/>
            <person name="Suzuki Y."/>
            <person name="Honda G."/>
            <person name="Muramatsu S."/>
            <person name="Matsuzaki O."/>
            <person name="Nagano Y."/>
            <person name="Doi T."/>
            <person name="Shimotohno K."/>
            <person name="Harada T."/>
            <person name="Nishida E."/>
            <person name="Hayashi H."/>
            <person name="Sugano S."/>
        </authorList>
    </citation>
    <scope>NUCLEOTIDE SEQUENCE [LARGE SCALE MRNA]</scope>
    <source>
        <tissue>Lung</tissue>
    </source>
</reference>
<reference key="3">
    <citation type="journal article" date="2004" name="Nat. Genet.">
        <title>Complete sequencing and characterization of 21,243 full-length human cDNAs.</title>
        <authorList>
            <person name="Ota T."/>
            <person name="Suzuki Y."/>
            <person name="Nishikawa T."/>
            <person name="Otsuki T."/>
            <person name="Sugiyama T."/>
            <person name="Irie R."/>
            <person name="Wakamatsu A."/>
            <person name="Hayashi K."/>
            <person name="Sato H."/>
            <person name="Nagai K."/>
            <person name="Kimura K."/>
            <person name="Makita H."/>
            <person name="Sekine M."/>
            <person name="Obayashi M."/>
            <person name="Nishi T."/>
            <person name="Shibahara T."/>
            <person name="Tanaka T."/>
            <person name="Ishii S."/>
            <person name="Yamamoto J."/>
            <person name="Saito K."/>
            <person name="Kawai Y."/>
            <person name="Isono Y."/>
            <person name="Nakamura Y."/>
            <person name="Nagahari K."/>
            <person name="Murakami K."/>
            <person name="Yasuda T."/>
            <person name="Iwayanagi T."/>
            <person name="Wagatsuma M."/>
            <person name="Shiratori A."/>
            <person name="Sudo H."/>
            <person name="Hosoiri T."/>
            <person name="Kaku Y."/>
            <person name="Kodaira H."/>
            <person name="Kondo H."/>
            <person name="Sugawara M."/>
            <person name="Takahashi M."/>
            <person name="Kanda K."/>
            <person name="Yokoi T."/>
            <person name="Furuya T."/>
            <person name="Kikkawa E."/>
            <person name="Omura Y."/>
            <person name="Abe K."/>
            <person name="Kamihara K."/>
            <person name="Katsuta N."/>
            <person name="Sato K."/>
            <person name="Tanikawa M."/>
            <person name="Yamazaki M."/>
            <person name="Ninomiya K."/>
            <person name="Ishibashi T."/>
            <person name="Yamashita H."/>
            <person name="Murakawa K."/>
            <person name="Fujimori K."/>
            <person name="Tanai H."/>
            <person name="Kimata M."/>
            <person name="Watanabe M."/>
            <person name="Hiraoka S."/>
            <person name="Chiba Y."/>
            <person name="Ishida S."/>
            <person name="Ono Y."/>
            <person name="Takiguchi S."/>
            <person name="Watanabe S."/>
            <person name="Yosida M."/>
            <person name="Hotuta T."/>
            <person name="Kusano J."/>
            <person name="Kanehori K."/>
            <person name="Takahashi-Fujii A."/>
            <person name="Hara H."/>
            <person name="Tanase T.-O."/>
            <person name="Nomura Y."/>
            <person name="Togiya S."/>
            <person name="Komai F."/>
            <person name="Hara R."/>
            <person name="Takeuchi K."/>
            <person name="Arita M."/>
            <person name="Imose N."/>
            <person name="Musashino K."/>
            <person name="Yuuki H."/>
            <person name="Oshima A."/>
            <person name="Sasaki N."/>
            <person name="Aotsuka S."/>
            <person name="Yoshikawa Y."/>
            <person name="Matsunawa H."/>
            <person name="Ichihara T."/>
            <person name="Shiohata N."/>
            <person name="Sano S."/>
            <person name="Moriya S."/>
            <person name="Momiyama H."/>
            <person name="Satoh N."/>
            <person name="Takami S."/>
            <person name="Terashima Y."/>
            <person name="Suzuki O."/>
            <person name="Nakagawa S."/>
            <person name="Senoh A."/>
            <person name="Mizoguchi H."/>
            <person name="Goto Y."/>
            <person name="Shimizu F."/>
            <person name="Wakebe H."/>
            <person name="Hishigaki H."/>
            <person name="Watanabe T."/>
            <person name="Sugiyama A."/>
            <person name="Takemoto M."/>
            <person name="Kawakami B."/>
            <person name="Yamazaki M."/>
            <person name="Watanabe K."/>
            <person name="Kumagai A."/>
            <person name="Itakura S."/>
            <person name="Fukuzumi Y."/>
            <person name="Fujimori Y."/>
            <person name="Komiyama M."/>
            <person name="Tashiro H."/>
            <person name="Tanigami A."/>
            <person name="Fujiwara T."/>
            <person name="Ono T."/>
            <person name="Yamada K."/>
            <person name="Fujii Y."/>
            <person name="Ozaki K."/>
            <person name="Hirao M."/>
            <person name="Ohmori Y."/>
            <person name="Kawabata A."/>
            <person name="Hikiji T."/>
            <person name="Kobatake N."/>
            <person name="Inagaki H."/>
            <person name="Ikema Y."/>
            <person name="Okamoto S."/>
            <person name="Okitani R."/>
            <person name="Kawakami T."/>
            <person name="Noguchi S."/>
            <person name="Itoh T."/>
            <person name="Shigeta K."/>
            <person name="Senba T."/>
            <person name="Matsumura K."/>
            <person name="Nakajima Y."/>
            <person name="Mizuno T."/>
            <person name="Morinaga M."/>
            <person name="Sasaki M."/>
            <person name="Togashi T."/>
            <person name="Oyama M."/>
            <person name="Hata H."/>
            <person name="Watanabe M."/>
            <person name="Komatsu T."/>
            <person name="Mizushima-Sugano J."/>
            <person name="Satoh T."/>
            <person name="Shirai Y."/>
            <person name="Takahashi Y."/>
            <person name="Nakagawa K."/>
            <person name="Okumura K."/>
            <person name="Nagase T."/>
            <person name="Nomura N."/>
            <person name="Kikuchi H."/>
            <person name="Masuho Y."/>
            <person name="Yamashita R."/>
            <person name="Nakai K."/>
            <person name="Yada T."/>
            <person name="Nakamura Y."/>
            <person name="Ohara O."/>
            <person name="Isogai T."/>
            <person name="Sugano S."/>
        </authorList>
    </citation>
    <scope>NUCLEOTIDE SEQUENCE [LARGE SCALE MRNA]</scope>
    <source>
        <tissue>Teratocarcinoma</tissue>
    </source>
</reference>
<reference key="4">
    <citation type="journal article" date="2007" name="BMC Genomics">
        <title>The full-ORF clone resource of the German cDNA consortium.</title>
        <authorList>
            <person name="Bechtel S."/>
            <person name="Rosenfelder H."/>
            <person name="Duda A."/>
            <person name="Schmidt C.P."/>
            <person name="Ernst U."/>
            <person name="Wellenreuther R."/>
            <person name="Mehrle A."/>
            <person name="Schuster C."/>
            <person name="Bahr A."/>
            <person name="Bloecker H."/>
            <person name="Heubner D."/>
            <person name="Hoerlein A."/>
            <person name="Michel G."/>
            <person name="Wedler H."/>
            <person name="Koehrer K."/>
            <person name="Ottenwaelder B."/>
            <person name="Poustka A."/>
            <person name="Wiemann S."/>
            <person name="Schupp I."/>
        </authorList>
    </citation>
    <scope>NUCLEOTIDE SEQUENCE [LARGE SCALE MRNA]</scope>
    <source>
        <tissue>Melanoma</tissue>
    </source>
</reference>
<reference key="5">
    <citation type="journal article" date="2006" name="Nature">
        <title>The DNA sequence and biological annotation of human chromosome 1.</title>
        <authorList>
            <person name="Gregory S.G."/>
            <person name="Barlow K.F."/>
            <person name="McLay K.E."/>
            <person name="Kaul R."/>
            <person name="Swarbreck D."/>
            <person name="Dunham A."/>
            <person name="Scott C.E."/>
            <person name="Howe K.L."/>
            <person name="Woodfine K."/>
            <person name="Spencer C.C.A."/>
            <person name="Jones M.C."/>
            <person name="Gillson C."/>
            <person name="Searle S."/>
            <person name="Zhou Y."/>
            <person name="Kokocinski F."/>
            <person name="McDonald L."/>
            <person name="Evans R."/>
            <person name="Phillips K."/>
            <person name="Atkinson A."/>
            <person name="Cooper R."/>
            <person name="Jones C."/>
            <person name="Hall R.E."/>
            <person name="Andrews T.D."/>
            <person name="Lloyd C."/>
            <person name="Ainscough R."/>
            <person name="Almeida J.P."/>
            <person name="Ambrose K.D."/>
            <person name="Anderson F."/>
            <person name="Andrew R.W."/>
            <person name="Ashwell R.I.S."/>
            <person name="Aubin K."/>
            <person name="Babbage A.K."/>
            <person name="Bagguley C.L."/>
            <person name="Bailey J."/>
            <person name="Beasley H."/>
            <person name="Bethel G."/>
            <person name="Bird C.P."/>
            <person name="Bray-Allen S."/>
            <person name="Brown J.Y."/>
            <person name="Brown A.J."/>
            <person name="Buckley D."/>
            <person name="Burton J."/>
            <person name="Bye J."/>
            <person name="Carder C."/>
            <person name="Chapman J.C."/>
            <person name="Clark S.Y."/>
            <person name="Clarke G."/>
            <person name="Clee C."/>
            <person name="Cobley V."/>
            <person name="Collier R.E."/>
            <person name="Corby N."/>
            <person name="Coville G.J."/>
            <person name="Davies J."/>
            <person name="Deadman R."/>
            <person name="Dunn M."/>
            <person name="Earthrowl M."/>
            <person name="Ellington A.G."/>
            <person name="Errington H."/>
            <person name="Frankish A."/>
            <person name="Frankland J."/>
            <person name="French L."/>
            <person name="Garner P."/>
            <person name="Garnett J."/>
            <person name="Gay L."/>
            <person name="Ghori M.R.J."/>
            <person name="Gibson R."/>
            <person name="Gilby L.M."/>
            <person name="Gillett W."/>
            <person name="Glithero R.J."/>
            <person name="Grafham D.V."/>
            <person name="Griffiths C."/>
            <person name="Griffiths-Jones S."/>
            <person name="Grocock R."/>
            <person name="Hammond S."/>
            <person name="Harrison E.S.I."/>
            <person name="Hart E."/>
            <person name="Haugen E."/>
            <person name="Heath P.D."/>
            <person name="Holmes S."/>
            <person name="Holt K."/>
            <person name="Howden P.J."/>
            <person name="Hunt A.R."/>
            <person name="Hunt S.E."/>
            <person name="Hunter G."/>
            <person name="Isherwood J."/>
            <person name="James R."/>
            <person name="Johnson C."/>
            <person name="Johnson D."/>
            <person name="Joy A."/>
            <person name="Kay M."/>
            <person name="Kershaw J.K."/>
            <person name="Kibukawa M."/>
            <person name="Kimberley A.M."/>
            <person name="King A."/>
            <person name="Knights A.J."/>
            <person name="Lad H."/>
            <person name="Laird G."/>
            <person name="Lawlor S."/>
            <person name="Leongamornlert D.A."/>
            <person name="Lloyd D.M."/>
            <person name="Loveland J."/>
            <person name="Lovell J."/>
            <person name="Lush M.J."/>
            <person name="Lyne R."/>
            <person name="Martin S."/>
            <person name="Mashreghi-Mohammadi M."/>
            <person name="Matthews L."/>
            <person name="Matthews N.S.W."/>
            <person name="McLaren S."/>
            <person name="Milne S."/>
            <person name="Mistry S."/>
            <person name="Moore M.J.F."/>
            <person name="Nickerson T."/>
            <person name="O'Dell C.N."/>
            <person name="Oliver K."/>
            <person name="Palmeiri A."/>
            <person name="Palmer S.A."/>
            <person name="Parker A."/>
            <person name="Patel D."/>
            <person name="Pearce A.V."/>
            <person name="Peck A.I."/>
            <person name="Pelan S."/>
            <person name="Phelps K."/>
            <person name="Phillimore B.J."/>
            <person name="Plumb R."/>
            <person name="Rajan J."/>
            <person name="Raymond C."/>
            <person name="Rouse G."/>
            <person name="Saenphimmachak C."/>
            <person name="Sehra H.K."/>
            <person name="Sheridan E."/>
            <person name="Shownkeen R."/>
            <person name="Sims S."/>
            <person name="Skuce C.D."/>
            <person name="Smith M."/>
            <person name="Steward C."/>
            <person name="Subramanian S."/>
            <person name="Sycamore N."/>
            <person name="Tracey A."/>
            <person name="Tromans A."/>
            <person name="Van Helmond Z."/>
            <person name="Wall M."/>
            <person name="Wallis J.M."/>
            <person name="White S."/>
            <person name="Whitehead S.L."/>
            <person name="Wilkinson J.E."/>
            <person name="Willey D.L."/>
            <person name="Williams H."/>
            <person name="Wilming L."/>
            <person name="Wray P.W."/>
            <person name="Wu Z."/>
            <person name="Coulson A."/>
            <person name="Vaudin M."/>
            <person name="Sulston J.E."/>
            <person name="Durbin R.M."/>
            <person name="Hubbard T."/>
            <person name="Wooster R."/>
            <person name="Dunham I."/>
            <person name="Carter N.P."/>
            <person name="McVean G."/>
            <person name="Ross M.T."/>
            <person name="Harrow J."/>
            <person name="Olson M.V."/>
            <person name="Beck S."/>
            <person name="Rogers J."/>
            <person name="Bentley D.R."/>
        </authorList>
    </citation>
    <scope>NUCLEOTIDE SEQUENCE [LARGE SCALE GENOMIC DNA]</scope>
</reference>
<reference key="6">
    <citation type="journal article" date="2004" name="Genome Res.">
        <title>The status, quality, and expansion of the NIH full-length cDNA project: the Mammalian Gene Collection (MGC).</title>
        <authorList>
            <consortium name="The MGC Project Team"/>
        </authorList>
    </citation>
    <scope>NUCLEOTIDE SEQUENCE [LARGE SCALE MRNA]</scope>
    <source>
        <tissue>Brain</tissue>
        <tissue>Skin</tissue>
    </source>
</reference>
<reference key="7">
    <citation type="journal article" date="2008" name="Curr. Biol.">
        <title>Cargo-selected transport from the mitochondria to peroxisomes is mediated by vesicular carriers.</title>
        <authorList>
            <person name="Neuspiel M."/>
            <person name="Schauss A.C."/>
            <person name="Braschi E."/>
            <person name="Zunino R."/>
            <person name="Rippstein P."/>
            <person name="Rachubinski R.A."/>
            <person name="Andrade-Navarro M.A."/>
            <person name="McBride H.M."/>
        </authorList>
    </citation>
    <scope>FUNCTION</scope>
    <scope>SUBCELLULAR LOCATION</scope>
    <scope>TOPOLOGY</scope>
</reference>
<reference key="8">
    <citation type="journal article" date="2008" name="PLoS ONE">
        <title>Genome-wide and functional annotation of human E3 ubiquitin ligases identifies MULAN, a mitochondrial E3 that regulates the organelle's dynamics and signaling.</title>
        <authorList>
            <person name="Li W."/>
            <person name="Bengtson M.H."/>
            <person name="Ulbrich A."/>
            <person name="Matsuda A."/>
            <person name="Reddy V.A."/>
            <person name="Orth A."/>
            <person name="Chanda S.K."/>
            <person name="Batalov S."/>
            <person name="Joazeiro C.A.P."/>
        </authorList>
    </citation>
    <scope>FUNCTION</scope>
    <scope>SUBCELLULAR LOCATION</scope>
    <scope>TISSUE SPECIFICITY</scope>
    <scope>TOPOLOGY</scope>
    <scope>MUTAGENESIS OF ARG-260; LYS-261 AND CYS-339</scope>
</reference>
<reference key="9">
    <citation type="journal article" date="2009" name="EMBO Rep.">
        <title>MAPL is a new mitochondrial SUMO E3 ligase that regulates mitochondrial fission.</title>
        <authorList>
            <person name="Braschi E."/>
            <person name="Zunino R."/>
            <person name="McBride H.M."/>
        </authorList>
    </citation>
    <scope>FUNCTION AS SUMO LIGASE</scope>
    <scope>INTERACTION WITH UBC9 AND DNM1L</scope>
    <scope>PATHWAY</scope>
</reference>
<reference key="10">
    <citation type="journal article" date="2011" name="Cell Death Differ.">
        <title>E3 ubiquitin ligase Hades negatively regulates the exonuclear function of p53.</title>
        <authorList>
            <person name="Jung J.H."/>
            <person name="Bae S."/>
            <person name="Lee J.Y."/>
            <person name="Woo S.R."/>
            <person name="Cha H.J."/>
            <person name="Yoon Y."/>
            <person name="Suh K.S."/>
            <person name="Lee S.J."/>
            <person name="Park I.C."/>
            <person name="Jin Y.W."/>
            <person name="Lee K.H."/>
            <person name="An S."/>
            <person name="Lee J.H."/>
        </authorList>
    </citation>
    <scope>FUNCTION</scope>
    <scope>CATALYTIC ACTIVITY</scope>
    <scope>PATHWAY</scope>
    <scope>INTERACTION WITH TP53</scope>
    <scope>SUBCELLULAR LOCATION</scope>
    <scope>MUTAGENESIS OF CYS-302 AND CYS-305</scope>
</reference>
<reference key="11">
    <citation type="journal article" date="2012" name="Cell Res.">
        <title>Akt is negatively regulated by the MULAN E3 ligase.</title>
        <authorList>
            <person name="Bae S."/>
            <person name="Kim S.Y."/>
            <person name="Jung J.H."/>
            <person name="Yoon Y."/>
            <person name="Cha H.J."/>
            <person name="Lee H."/>
            <person name="Kim K."/>
            <person name="Kim J."/>
            <person name="An I.S."/>
            <person name="Kim J."/>
            <person name="Um H.D."/>
            <person name="Park I.C."/>
            <person name="Lee S.J."/>
            <person name="Nam S.Y."/>
            <person name="Jin Y.W."/>
            <person name="Lee J.H."/>
            <person name="An S."/>
        </authorList>
    </citation>
    <scope>FUNCTION IN UBIQUITINATION OF AKT1</scope>
    <scope>CATALYTIC ACTIVITY</scope>
</reference>
<reference key="12">
    <citation type="journal article" date="2013" name="Immunol. Cell Biol.">
        <title>Mitochondrially localised MUL1 is a novel modulator of antiviral signaling.</title>
        <authorList>
            <person name="Jenkins K."/>
            <person name="Khoo J.J."/>
            <person name="Sadler A."/>
            <person name="Piganis R."/>
            <person name="Wang D."/>
            <person name="Borg N.A."/>
            <person name="Hjerrild K."/>
            <person name="Gould J."/>
            <person name="Thomas B.J."/>
            <person name="Nagley P."/>
            <person name="Hertzog P.J."/>
            <person name="Mansell A."/>
        </authorList>
    </citation>
    <scope>FUNCTION</scope>
    <scope>INTERACTION WITH MAVS</scope>
</reference>
<reference key="13">
    <citation type="journal article" date="2014" name="Elife">
        <title>MUL1 acts in parallel to the PINK1/parkin pathway in regulating mitofusin and compensates for loss of PINK1/parkin.</title>
        <authorList>
            <person name="Yun J."/>
            <person name="Puri R."/>
            <person name="Yang H."/>
            <person name="Lizzio M.A."/>
            <person name="Wu C."/>
            <person name="Sheng Z.H."/>
            <person name="Guo M."/>
        </authorList>
    </citation>
    <scope>FUNCTION</scope>
</reference>
<reference key="14">
    <citation type="journal article" date="2015" name="Nat. Cell Biol.">
        <title>USP30 and parkin homeostatically regulate atypical ubiquitin chains on mitochondria.</title>
        <authorList>
            <person name="Cunningham C.N."/>
            <person name="Baughman J.M."/>
            <person name="Phu L."/>
            <person name="Tea J.S."/>
            <person name="Yu C."/>
            <person name="Coons M."/>
            <person name="Kirkpatrick D.S."/>
            <person name="Bingol B."/>
            <person name="Corn J.E."/>
        </authorList>
    </citation>
    <scope>UBIQUITINATION AT LYS-52; LYS-273 AND LYS-299</scope>
</reference>
<organism>
    <name type="scientific">Homo sapiens</name>
    <name type="common">Human</name>
    <dbReference type="NCBI Taxonomy" id="9606"/>
    <lineage>
        <taxon>Eukaryota</taxon>
        <taxon>Metazoa</taxon>
        <taxon>Chordata</taxon>
        <taxon>Craniata</taxon>
        <taxon>Vertebrata</taxon>
        <taxon>Euteleostomi</taxon>
        <taxon>Mammalia</taxon>
        <taxon>Eutheria</taxon>
        <taxon>Euarchontoglires</taxon>
        <taxon>Primates</taxon>
        <taxon>Haplorrhini</taxon>
        <taxon>Catarrhini</taxon>
        <taxon>Hominidae</taxon>
        <taxon>Homo</taxon>
    </lineage>
</organism>